<evidence type="ECO:0000250" key="1">
    <source>
        <dbReference type="UniProtKB" id="P22061"/>
    </source>
</evidence>
<evidence type="ECO:0000250" key="2">
    <source>
        <dbReference type="UniProtKB" id="Q27869"/>
    </source>
</evidence>
<evidence type="ECO:0000250" key="3">
    <source>
        <dbReference type="UniProtKB" id="Q96MG8"/>
    </source>
</evidence>
<evidence type="ECO:0000255" key="4"/>
<evidence type="ECO:0000256" key="5">
    <source>
        <dbReference type="SAM" id="MobiDB-lite"/>
    </source>
</evidence>
<evidence type="ECO:0000305" key="6"/>
<name>PCMD2_MOUSE</name>
<feature type="initiator methionine" description="Removed" evidence="4">
    <location>
        <position position="1"/>
    </location>
</feature>
<feature type="chain" id="PRO_0000111928" description="Protein-L-isoaspartate O-methyltransferase domain-containing protein 2">
    <location>
        <begin position="2"/>
        <end position="359"/>
    </location>
</feature>
<feature type="region of interest" description="AdoMet binding motif" evidence="3">
    <location>
        <begin position="85"/>
        <end position="94"/>
    </location>
</feature>
<feature type="region of interest" description="AdoMet binding motif" evidence="3">
    <location>
        <begin position="160"/>
        <end position="164"/>
    </location>
</feature>
<feature type="region of interest" description="AdoMet binding motif" evidence="3">
    <location>
        <begin position="181"/>
        <end position="191"/>
    </location>
</feature>
<feature type="region of interest" description="BC-box" evidence="3">
    <location>
        <begin position="240"/>
        <end position="250"/>
    </location>
</feature>
<feature type="region of interest" description="Disordered" evidence="5">
    <location>
        <begin position="301"/>
        <end position="328"/>
    </location>
</feature>
<feature type="region of interest" description="CUL-box" evidence="3">
    <location>
        <begin position="343"/>
        <end position="346"/>
    </location>
</feature>
<feature type="compositionally biased region" description="Basic and acidic residues" evidence="5">
    <location>
        <begin position="314"/>
        <end position="328"/>
    </location>
</feature>
<feature type="active site" evidence="2">
    <location>
        <position position="64"/>
    </location>
</feature>
<feature type="lipid moiety-binding region" description="N-myristoyl glycine" evidence="4">
    <location>
        <position position="2"/>
    </location>
</feature>
<feature type="sequence conflict" description="In Ref. 1; BAC27352." evidence="6" ref="1">
    <original>L</original>
    <variation>I</variation>
    <location>
        <position position="14"/>
    </location>
</feature>
<feature type="sequence conflict" description="In Ref. 1; BAC36747." evidence="6" ref="1">
    <original>ET</original>
    <variation>DI</variation>
    <location>
        <begin position="207"/>
        <end position="208"/>
    </location>
</feature>
<feature type="sequence conflict" description="In Ref. 1; BAC27352." evidence="6" ref="1">
    <original>L</original>
    <variation>S</variation>
    <location>
        <position position="291"/>
    </location>
</feature>
<gene>
    <name type="primary">Pcmtd2</name>
</gene>
<comment type="function">
    <text evidence="3">May act as a substrate recognition component of an ECS (Elongin BC-CUL5-SOCS-box protein) E3 ubiquitin ligase complex which mediates the ubiquitination and subsequent proteasomal degradation of target proteins. May bind to the methyltransferase cofactor S-adenosylmethionine (AdoMet) via the N-terminal AdoMet binding motif, but probably does not display methyltransferase activity.</text>
</comment>
<comment type="subcellular location">
    <subcellularLocation>
        <location evidence="1">Cytoplasm</location>
    </subcellularLocation>
</comment>
<comment type="domain">
    <text evidence="3">At its N-terminus, contains L-isoaspartate and S-adenosylmethionine (AdoMet) binding motifs. Also contains an extended SOCS box motif, where the Cul-box is separated from the BC-box by ~90 residues, within its C-terminus.</text>
</comment>
<comment type="similarity">
    <text evidence="6">Belongs to the methyltransferase superfamily. L-isoaspartyl/D-aspartyl protein methyltransferase family.</text>
</comment>
<comment type="caution">
    <text evidence="3">Although the active site residue Ser is conserved, appears to lack catalytic activity in vitro.</text>
</comment>
<comment type="sequence caution" evidence="6">
    <conflict type="erroneous initiation">
        <sequence resource="EMBL-CDS" id="BAC37785"/>
    </conflict>
    <text>Truncated N-terminus.</text>
</comment>
<reference key="1">
    <citation type="journal article" date="2005" name="Science">
        <title>The transcriptional landscape of the mammalian genome.</title>
        <authorList>
            <person name="Carninci P."/>
            <person name="Kasukawa T."/>
            <person name="Katayama S."/>
            <person name="Gough J."/>
            <person name="Frith M.C."/>
            <person name="Maeda N."/>
            <person name="Oyama R."/>
            <person name="Ravasi T."/>
            <person name="Lenhard B."/>
            <person name="Wells C."/>
            <person name="Kodzius R."/>
            <person name="Shimokawa K."/>
            <person name="Bajic V.B."/>
            <person name="Brenner S.E."/>
            <person name="Batalov S."/>
            <person name="Forrest A.R."/>
            <person name="Zavolan M."/>
            <person name="Davis M.J."/>
            <person name="Wilming L.G."/>
            <person name="Aidinis V."/>
            <person name="Allen J.E."/>
            <person name="Ambesi-Impiombato A."/>
            <person name="Apweiler R."/>
            <person name="Aturaliya R.N."/>
            <person name="Bailey T.L."/>
            <person name="Bansal M."/>
            <person name="Baxter L."/>
            <person name="Beisel K.W."/>
            <person name="Bersano T."/>
            <person name="Bono H."/>
            <person name="Chalk A.M."/>
            <person name="Chiu K.P."/>
            <person name="Choudhary V."/>
            <person name="Christoffels A."/>
            <person name="Clutterbuck D.R."/>
            <person name="Crowe M.L."/>
            <person name="Dalla E."/>
            <person name="Dalrymple B.P."/>
            <person name="de Bono B."/>
            <person name="Della Gatta G."/>
            <person name="di Bernardo D."/>
            <person name="Down T."/>
            <person name="Engstrom P."/>
            <person name="Fagiolini M."/>
            <person name="Faulkner G."/>
            <person name="Fletcher C.F."/>
            <person name="Fukushima T."/>
            <person name="Furuno M."/>
            <person name="Futaki S."/>
            <person name="Gariboldi M."/>
            <person name="Georgii-Hemming P."/>
            <person name="Gingeras T.R."/>
            <person name="Gojobori T."/>
            <person name="Green R.E."/>
            <person name="Gustincich S."/>
            <person name="Harbers M."/>
            <person name="Hayashi Y."/>
            <person name="Hensch T.K."/>
            <person name="Hirokawa N."/>
            <person name="Hill D."/>
            <person name="Huminiecki L."/>
            <person name="Iacono M."/>
            <person name="Ikeo K."/>
            <person name="Iwama A."/>
            <person name="Ishikawa T."/>
            <person name="Jakt M."/>
            <person name="Kanapin A."/>
            <person name="Katoh M."/>
            <person name="Kawasawa Y."/>
            <person name="Kelso J."/>
            <person name="Kitamura H."/>
            <person name="Kitano H."/>
            <person name="Kollias G."/>
            <person name="Krishnan S.P."/>
            <person name="Kruger A."/>
            <person name="Kummerfeld S.K."/>
            <person name="Kurochkin I.V."/>
            <person name="Lareau L.F."/>
            <person name="Lazarevic D."/>
            <person name="Lipovich L."/>
            <person name="Liu J."/>
            <person name="Liuni S."/>
            <person name="McWilliam S."/>
            <person name="Madan Babu M."/>
            <person name="Madera M."/>
            <person name="Marchionni L."/>
            <person name="Matsuda H."/>
            <person name="Matsuzawa S."/>
            <person name="Miki H."/>
            <person name="Mignone F."/>
            <person name="Miyake S."/>
            <person name="Morris K."/>
            <person name="Mottagui-Tabar S."/>
            <person name="Mulder N."/>
            <person name="Nakano N."/>
            <person name="Nakauchi H."/>
            <person name="Ng P."/>
            <person name="Nilsson R."/>
            <person name="Nishiguchi S."/>
            <person name="Nishikawa S."/>
            <person name="Nori F."/>
            <person name="Ohara O."/>
            <person name="Okazaki Y."/>
            <person name="Orlando V."/>
            <person name="Pang K.C."/>
            <person name="Pavan W.J."/>
            <person name="Pavesi G."/>
            <person name="Pesole G."/>
            <person name="Petrovsky N."/>
            <person name="Piazza S."/>
            <person name="Reed J."/>
            <person name="Reid J.F."/>
            <person name="Ring B.Z."/>
            <person name="Ringwald M."/>
            <person name="Rost B."/>
            <person name="Ruan Y."/>
            <person name="Salzberg S.L."/>
            <person name="Sandelin A."/>
            <person name="Schneider C."/>
            <person name="Schoenbach C."/>
            <person name="Sekiguchi K."/>
            <person name="Semple C.A."/>
            <person name="Seno S."/>
            <person name="Sessa L."/>
            <person name="Sheng Y."/>
            <person name="Shibata Y."/>
            <person name="Shimada H."/>
            <person name="Shimada K."/>
            <person name="Silva D."/>
            <person name="Sinclair B."/>
            <person name="Sperling S."/>
            <person name="Stupka E."/>
            <person name="Sugiura K."/>
            <person name="Sultana R."/>
            <person name="Takenaka Y."/>
            <person name="Taki K."/>
            <person name="Tammoja K."/>
            <person name="Tan S.L."/>
            <person name="Tang S."/>
            <person name="Taylor M.S."/>
            <person name="Tegner J."/>
            <person name="Teichmann S.A."/>
            <person name="Ueda H.R."/>
            <person name="van Nimwegen E."/>
            <person name="Verardo R."/>
            <person name="Wei C.L."/>
            <person name="Yagi K."/>
            <person name="Yamanishi H."/>
            <person name="Zabarovsky E."/>
            <person name="Zhu S."/>
            <person name="Zimmer A."/>
            <person name="Hide W."/>
            <person name="Bult C."/>
            <person name="Grimmond S.M."/>
            <person name="Teasdale R.D."/>
            <person name="Liu E.T."/>
            <person name="Brusic V."/>
            <person name="Quackenbush J."/>
            <person name="Wahlestedt C."/>
            <person name="Mattick J.S."/>
            <person name="Hume D.A."/>
            <person name="Kai C."/>
            <person name="Sasaki D."/>
            <person name="Tomaru Y."/>
            <person name="Fukuda S."/>
            <person name="Kanamori-Katayama M."/>
            <person name="Suzuki M."/>
            <person name="Aoki J."/>
            <person name="Arakawa T."/>
            <person name="Iida J."/>
            <person name="Imamura K."/>
            <person name="Itoh M."/>
            <person name="Kato T."/>
            <person name="Kawaji H."/>
            <person name="Kawagashira N."/>
            <person name="Kawashima T."/>
            <person name="Kojima M."/>
            <person name="Kondo S."/>
            <person name="Konno H."/>
            <person name="Nakano K."/>
            <person name="Ninomiya N."/>
            <person name="Nishio T."/>
            <person name="Okada M."/>
            <person name="Plessy C."/>
            <person name="Shibata K."/>
            <person name="Shiraki T."/>
            <person name="Suzuki S."/>
            <person name="Tagami M."/>
            <person name="Waki K."/>
            <person name="Watahiki A."/>
            <person name="Okamura-Oho Y."/>
            <person name="Suzuki H."/>
            <person name="Kawai J."/>
            <person name="Hayashizaki Y."/>
        </authorList>
    </citation>
    <scope>NUCLEOTIDE SEQUENCE [LARGE SCALE MRNA]</scope>
    <source>
        <strain>C57BL/6J</strain>
        <strain>NOD</strain>
        <tissue>Aorta</tissue>
        <tissue>Pituitary</tissue>
        <tissue>Placenta</tissue>
        <tissue>Testis</tissue>
        <tissue>Thymus</tissue>
        <tissue>Vein</tissue>
    </source>
</reference>
<reference key="2">
    <citation type="journal article" date="2004" name="Genome Res.">
        <title>The status, quality, and expansion of the NIH full-length cDNA project: the Mammalian Gene Collection (MGC).</title>
        <authorList>
            <consortium name="The MGC Project Team"/>
        </authorList>
    </citation>
    <scope>NUCLEOTIDE SEQUENCE [LARGE SCALE MRNA]</scope>
    <source>
        <strain>FVB/N</strain>
        <tissue>Eye</tissue>
        <tissue>Mammary cancer</tissue>
        <tissue>Retina</tissue>
    </source>
</reference>
<protein>
    <recommendedName>
        <fullName>Protein-L-isoaspartate O-methyltransferase domain-containing protein 2</fullName>
    </recommendedName>
</protein>
<organism>
    <name type="scientific">Mus musculus</name>
    <name type="common">Mouse</name>
    <dbReference type="NCBI Taxonomy" id="10090"/>
    <lineage>
        <taxon>Eukaryota</taxon>
        <taxon>Metazoa</taxon>
        <taxon>Chordata</taxon>
        <taxon>Craniata</taxon>
        <taxon>Vertebrata</taxon>
        <taxon>Euteleostomi</taxon>
        <taxon>Mammalia</taxon>
        <taxon>Eutheria</taxon>
        <taxon>Euarchontoglires</taxon>
        <taxon>Glires</taxon>
        <taxon>Rodentia</taxon>
        <taxon>Myomorpha</taxon>
        <taxon>Muroidea</taxon>
        <taxon>Muridae</taxon>
        <taxon>Murinae</taxon>
        <taxon>Mus</taxon>
        <taxon>Mus</taxon>
    </lineage>
</organism>
<accession>Q8BHD8</accession>
<accession>Q3UKB7</accession>
<accession>Q8BJT6</accession>
<accession>Q8BK38</accession>
<accession>Q8C0H6</accession>
<accession>Q8R1D5</accession>
<dbReference type="EMBL" id="AK031335">
    <property type="protein sequence ID" value="BAC27352.1"/>
    <property type="molecule type" value="mRNA"/>
</dbReference>
<dbReference type="EMBL" id="AK077319">
    <property type="protein sequence ID" value="BAC36747.1"/>
    <property type="molecule type" value="mRNA"/>
</dbReference>
<dbReference type="EMBL" id="AK079927">
    <property type="protein sequence ID" value="BAC37785.1"/>
    <property type="status" value="ALT_INIT"/>
    <property type="molecule type" value="mRNA"/>
</dbReference>
<dbReference type="EMBL" id="AK088800">
    <property type="protein sequence ID" value="BAC40579.1"/>
    <property type="molecule type" value="mRNA"/>
</dbReference>
<dbReference type="EMBL" id="AK146080">
    <property type="protein sequence ID" value="BAE26884.1"/>
    <property type="molecule type" value="mRNA"/>
</dbReference>
<dbReference type="EMBL" id="BC024791">
    <property type="protein sequence ID" value="AAH24791.1"/>
    <property type="molecule type" value="mRNA"/>
</dbReference>
<dbReference type="EMBL" id="BC031360">
    <property type="protein sequence ID" value="AAH31360.1"/>
    <property type="molecule type" value="mRNA"/>
</dbReference>
<dbReference type="EMBL" id="BC040385">
    <property type="protein sequence ID" value="AAH40385.1"/>
    <property type="molecule type" value="mRNA"/>
</dbReference>
<dbReference type="CCDS" id="CCDS17224.1"/>
<dbReference type="RefSeq" id="NP_001278140.1">
    <property type="nucleotide sequence ID" value="NM_001291211.1"/>
</dbReference>
<dbReference type="RefSeq" id="NP_705822.1">
    <property type="nucleotide sequence ID" value="NM_153594.3"/>
</dbReference>
<dbReference type="RefSeq" id="XP_036017950.1">
    <property type="nucleotide sequence ID" value="XM_036162057.1"/>
</dbReference>
<dbReference type="SMR" id="Q8BHD8"/>
<dbReference type="BioGRID" id="232844">
    <property type="interactions" value="5"/>
</dbReference>
<dbReference type="FunCoup" id="Q8BHD8">
    <property type="interactions" value="1196"/>
</dbReference>
<dbReference type="IntAct" id="Q8BHD8">
    <property type="interactions" value="3"/>
</dbReference>
<dbReference type="STRING" id="10090.ENSMUSP00000029116"/>
<dbReference type="iPTMnet" id="Q8BHD8"/>
<dbReference type="PhosphoSitePlus" id="Q8BHD8"/>
<dbReference type="PaxDb" id="10090-ENSMUSP00000029116"/>
<dbReference type="PeptideAtlas" id="Q8BHD8"/>
<dbReference type="ProteomicsDB" id="288075"/>
<dbReference type="Pumba" id="Q8BHD8"/>
<dbReference type="Antibodypedia" id="30018">
    <property type="antibodies" value="81 antibodies from 16 providers"/>
</dbReference>
<dbReference type="Ensembl" id="ENSMUST00000029116.14">
    <property type="protein sequence ID" value="ENSMUSP00000029116.8"/>
    <property type="gene ID" value="ENSMUSG00000027589.15"/>
</dbReference>
<dbReference type="GeneID" id="245867"/>
<dbReference type="KEGG" id="mmu:245867"/>
<dbReference type="UCSC" id="uc008onu.2">
    <property type="organism name" value="mouse"/>
</dbReference>
<dbReference type="AGR" id="MGI:1923927"/>
<dbReference type="CTD" id="55251"/>
<dbReference type="MGI" id="MGI:1923927">
    <property type="gene designation" value="Pcmtd2"/>
</dbReference>
<dbReference type="VEuPathDB" id="HostDB:ENSMUSG00000027589"/>
<dbReference type="eggNOG" id="KOG1661">
    <property type="taxonomic scope" value="Eukaryota"/>
</dbReference>
<dbReference type="GeneTree" id="ENSGT00950000183032"/>
<dbReference type="HOGENOM" id="CLU_029295_0_0_1"/>
<dbReference type="InParanoid" id="Q8BHD8"/>
<dbReference type="OMA" id="SWETKNI"/>
<dbReference type="OrthoDB" id="10257972at2759"/>
<dbReference type="PhylomeDB" id="Q8BHD8"/>
<dbReference type="TreeFam" id="TF329329"/>
<dbReference type="BioGRID-ORCS" id="245867">
    <property type="hits" value="5 hits in 76 CRISPR screens"/>
</dbReference>
<dbReference type="ChiTaRS" id="Pcmtd2">
    <property type="organism name" value="mouse"/>
</dbReference>
<dbReference type="PRO" id="PR:Q8BHD8"/>
<dbReference type="Proteomes" id="UP000000589">
    <property type="component" value="Chromosome 2"/>
</dbReference>
<dbReference type="RNAct" id="Q8BHD8">
    <property type="molecule type" value="protein"/>
</dbReference>
<dbReference type="Bgee" id="ENSMUSG00000027589">
    <property type="expression patterns" value="Expressed in retinal neural layer and 250 other cell types or tissues"/>
</dbReference>
<dbReference type="ExpressionAtlas" id="Q8BHD8">
    <property type="expression patterns" value="baseline and differential"/>
</dbReference>
<dbReference type="GO" id="GO:0005737">
    <property type="term" value="C:cytoplasm"/>
    <property type="evidence" value="ECO:0007669"/>
    <property type="project" value="UniProtKB-SubCell"/>
</dbReference>
<dbReference type="GO" id="GO:0004719">
    <property type="term" value="F:protein-L-isoaspartate (D-aspartate) O-methyltransferase activity"/>
    <property type="evidence" value="ECO:0007669"/>
    <property type="project" value="InterPro"/>
</dbReference>
<dbReference type="GO" id="GO:0036211">
    <property type="term" value="P:protein modification process"/>
    <property type="evidence" value="ECO:0007669"/>
    <property type="project" value="InterPro"/>
</dbReference>
<dbReference type="CDD" id="cd02440">
    <property type="entry name" value="AdoMet_MTases"/>
    <property type="match status" value="1"/>
</dbReference>
<dbReference type="FunFam" id="3.40.50.150:FF:000015">
    <property type="entry name" value="Protein-L-isoaspartate (D-aspartate) O-methyltransferase domain-containing 1"/>
    <property type="match status" value="1"/>
</dbReference>
<dbReference type="Gene3D" id="3.40.50.150">
    <property type="entry name" value="Vaccinia Virus protein VP39"/>
    <property type="match status" value="1"/>
</dbReference>
<dbReference type="InterPro" id="IPR000682">
    <property type="entry name" value="PCMT"/>
</dbReference>
<dbReference type="InterPro" id="IPR029063">
    <property type="entry name" value="SAM-dependent_MTases_sf"/>
</dbReference>
<dbReference type="PANTHER" id="PTHR11579">
    <property type="entry name" value="PROTEIN-L-ISOASPARTATE O-METHYLTRANSFERASE"/>
    <property type="match status" value="1"/>
</dbReference>
<dbReference type="PANTHER" id="PTHR11579:SF2">
    <property type="entry name" value="PROTEIN-L-ISOASPARTATE O-METHYLTRANSFERASE DOMAIN-CONTAINING PROTEIN 2"/>
    <property type="match status" value="1"/>
</dbReference>
<dbReference type="Pfam" id="PF01135">
    <property type="entry name" value="PCMT"/>
    <property type="match status" value="1"/>
</dbReference>
<dbReference type="SUPFAM" id="SSF53335">
    <property type="entry name" value="S-adenosyl-L-methionine-dependent methyltransferases"/>
    <property type="match status" value="1"/>
</dbReference>
<proteinExistence type="evidence at transcript level"/>
<sequence>MGGAVSAGEDNDELIDNLKEAQYIRTDLVEQAFRAIDRADYYLEEFKENAYKDLAWKHGNIHLSAPCIYSEVMEALDLQPGLSFLNLGSGTGYLSSMVGLILGPFGVNHGVELHSDVTEYAKQKLDVFIRTSDSFDKFDFCEPSFVTGNCLEIAPDCCQYDRVYCGAGVQKEHEEYMKNLLKVGGILVMPLEEKLTKITRTGPSAWETKKILAVSFAPLVQPCRSESGQSRLVQLPPPAVRSLQDLARLAIRGSIKRAMRQEATRGGGLKNTPMFKRRRVRRRRMETIVFLDKEVFASRISNPSDDTSCEDAEEDRREVAERTLQETKPEPPVNFLRQRVLRLPLPDPLKYYLLYYREK</sequence>
<keyword id="KW-0963">Cytoplasm</keyword>
<keyword id="KW-0449">Lipoprotein</keyword>
<keyword id="KW-0519">Myristate</keyword>
<keyword id="KW-1185">Reference proteome</keyword>